<organism>
    <name type="scientific">Porphyromonas gingivalis (strain ATCC BAA-308 / W83)</name>
    <dbReference type="NCBI Taxonomy" id="242619"/>
    <lineage>
        <taxon>Bacteria</taxon>
        <taxon>Pseudomonadati</taxon>
        <taxon>Bacteroidota</taxon>
        <taxon>Bacteroidia</taxon>
        <taxon>Bacteroidales</taxon>
        <taxon>Porphyromonadaceae</taxon>
        <taxon>Porphyromonas</taxon>
    </lineage>
</organism>
<accession>Q7MVE7</accession>
<proteinExistence type="inferred from homology"/>
<keyword id="KW-0067">ATP-binding</keyword>
<keyword id="KW-0143">Chaperone</keyword>
<keyword id="KW-0175">Coiled coil</keyword>
<keyword id="KW-0963">Cytoplasm</keyword>
<keyword id="KW-0547">Nucleotide-binding</keyword>
<keyword id="KW-1185">Reference proteome</keyword>
<keyword id="KW-0677">Repeat</keyword>
<keyword id="KW-0346">Stress response</keyword>
<sequence length="863" mass="97766">MNINNYTIKSQEALQQAVELTRRHGQQAIEPQHLLKAVMDQGESLTDFLFAKMGLNKGSIATAVDKLIEKLPHVSGGEPYLSHETNQVLQAAEDAAHRMKDKYVSLEHIVLAILTTRCEASTLLKDAGATEQLLQSAIEELRKGRNVTSQSAEEQYNALEKYAVNLCQRARDGKLDPVIGRDDEIRRVLQILSRRTKNNPILIGEPGVGKTAIAEGLAYRIVRGDVPENLRNKQIFSLDMGALIAGAKYKGEFEERLKAVVNEVTGAEGEIILFIDEIHTLVGAGKSEGAMDAANILKPALARGELRAIGATTLDEYRKYFEKDKALERRFQMVMVDEPDELSSISILRGLKEKYENHHKVRIKDDAIIAAVKLSHRYITERFLPDKAIDLMDEAAARLRMEVDSLPEELDEISRRIKQLEIEREAIKRENDEEKVQFLDREIAELKEKEASEKAQWQNEKDRINQIQQLKIDIEELKFQADRAEREGDYGRVAEIRYGLIKQKETEIDTIQQQLHELQRGGSMIKEEVEADDIADIVSRWTGIPVSRMLQSERDKLLHLEDELHKRVIGQDEAIRAVADAVRRSRAGLQDPKRPIGSFIFLGTTGVGKTELARALAELLFDDESMLTRIDMSEYQEKFSATRLIGAPPGYVGYDEGGQLTEAIRRKPYSVVLFDEIEKAHPDVFNVLLQVLDDGRLTDNKGHVVNFKNTLIIMTSNLGSDIIRERMQNLTAENRRSLTARTADEVMQLLKHTIRPEFLNRIDETIVFTPLTEKEIYEIVRLQLDGIVRQLADNDVVLHYTEAVVTFAAREGYDPQFGARPVKRVLQRFVLNELSKALLADTVDSTRPVLIDCIDGSIVFRNE</sequence>
<feature type="chain" id="PRO_0000191156" description="Chaperone protein ClpB">
    <location>
        <begin position="1"/>
        <end position="863"/>
    </location>
</feature>
<feature type="domain" description="Clp R" evidence="2">
    <location>
        <begin position="3"/>
        <end position="144"/>
    </location>
</feature>
<feature type="region of interest" description="Repeat 1" evidence="2">
    <location>
        <begin position="6"/>
        <end position="71"/>
    </location>
</feature>
<feature type="region of interest" description="Repeat 2" evidence="2">
    <location>
        <begin position="81"/>
        <end position="144"/>
    </location>
</feature>
<feature type="region of interest" description="NBD1" evidence="1">
    <location>
        <begin position="157"/>
        <end position="338"/>
    </location>
</feature>
<feature type="region of interest" description="Linker" evidence="1">
    <location>
        <begin position="339"/>
        <end position="543"/>
    </location>
</feature>
<feature type="region of interest" description="NBD2" evidence="1">
    <location>
        <begin position="553"/>
        <end position="770"/>
    </location>
</feature>
<feature type="region of interest" description="C-terminal" evidence="1">
    <location>
        <begin position="771"/>
        <end position="863"/>
    </location>
</feature>
<feature type="coiled-coil region" evidence="1">
    <location>
        <begin position="389"/>
        <end position="520"/>
    </location>
</feature>
<feature type="binding site" evidence="1">
    <location>
        <begin position="204"/>
        <end position="211"/>
    </location>
    <ligand>
        <name>ATP</name>
        <dbReference type="ChEBI" id="CHEBI:30616"/>
        <label>1</label>
    </ligand>
</feature>
<feature type="binding site" evidence="1">
    <location>
        <begin position="603"/>
        <end position="610"/>
    </location>
    <ligand>
        <name>ATP</name>
        <dbReference type="ChEBI" id="CHEBI:30616"/>
        <label>2</label>
    </ligand>
</feature>
<gene>
    <name type="primary">clpB</name>
    <name type="ordered locus">PG_1118</name>
</gene>
<protein>
    <recommendedName>
        <fullName>Chaperone protein ClpB</fullName>
    </recommendedName>
</protein>
<reference key="1">
    <citation type="journal article" date="2003" name="J. Bacteriol.">
        <title>Complete genome sequence of the oral pathogenic bacterium Porphyromonas gingivalis strain W83.</title>
        <authorList>
            <person name="Nelson K.E."/>
            <person name="Fleischmann R.D."/>
            <person name="DeBoy R.T."/>
            <person name="Paulsen I.T."/>
            <person name="Fouts D.E."/>
            <person name="Eisen J.A."/>
            <person name="Daugherty S.C."/>
            <person name="Dodson R.J."/>
            <person name="Durkin A.S."/>
            <person name="Gwinn M.L."/>
            <person name="Haft D.H."/>
            <person name="Kolonay J.F."/>
            <person name="Nelson W.C."/>
            <person name="Mason T.M."/>
            <person name="Tallon L."/>
            <person name="Gray J."/>
            <person name="Granger D."/>
            <person name="Tettelin H."/>
            <person name="Dong H."/>
            <person name="Galvin J.L."/>
            <person name="Duncan M.J."/>
            <person name="Dewhirst F.E."/>
            <person name="Fraser C.M."/>
        </authorList>
    </citation>
    <scope>NUCLEOTIDE SEQUENCE [LARGE SCALE GENOMIC DNA]</scope>
    <source>
        <strain>ATCC BAA-308 / W83</strain>
    </source>
</reference>
<dbReference type="EMBL" id="AE015924">
    <property type="protein sequence ID" value="AAQ66228.1"/>
    <property type="molecule type" value="Genomic_DNA"/>
</dbReference>
<dbReference type="RefSeq" id="WP_004584414.1">
    <property type="nucleotide sequence ID" value="NC_002950.2"/>
</dbReference>
<dbReference type="SMR" id="Q7MVE7"/>
<dbReference type="STRING" id="242619.PG_1118"/>
<dbReference type="EnsemblBacteria" id="AAQ66228">
    <property type="protein sequence ID" value="AAQ66228"/>
    <property type="gene ID" value="PG_1118"/>
</dbReference>
<dbReference type="KEGG" id="pgi:PG_1118"/>
<dbReference type="PATRIC" id="fig|242619.8.peg.1037"/>
<dbReference type="eggNOG" id="COG0542">
    <property type="taxonomic scope" value="Bacteria"/>
</dbReference>
<dbReference type="HOGENOM" id="CLU_005070_4_0_10"/>
<dbReference type="BioCyc" id="PGIN242619:G1G02-1047-MONOMER"/>
<dbReference type="Proteomes" id="UP000000588">
    <property type="component" value="Chromosome"/>
</dbReference>
<dbReference type="GO" id="GO:0005737">
    <property type="term" value="C:cytoplasm"/>
    <property type="evidence" value="ECO:0007669"/>
    <property type="project" value="UniProtKB-SubCell"/>
</dbReference>
<dbReference type="GO" id="GO:0005524">
    <property type="term" value="F:ATP binding"/>
    <property type="evidence" value="ECO:0007669"/>
    <property type="project" value="UniProtKB-KW"/>
</dbReference>
<dbReference type="GO" id="GO:0016887">
    <property type="term" value="F:ATP hydrolysis activity"/>
    <property type="evidence" value="ECO:0007669"/>
    <property type="project" value="InterPro"/>
</dbReference>
<dbReference type="GO" id="GO:0034605">
    <property type="term" value="P:cellular response to heat"/>
    <property type="evidence" value="ECO:0007669"/>
    <property type="project" value="TreeGrafter"/>
</dbReference>
<dbReference type="GO" id="GO:0042026">
    <property type="term" value="P:protein refolding"/>
    <property type="evidence" value="ECO:0007669"/>
    <property type="project" value="InterPro"/>
</dbReference>
<dbReference type="CDD" id="cd00009">
    <property type="entry name" value="AAA"/>
    <property type="match status" value="1"/>
</dbReference>
<dbReference type="CDD" id="cd19499">
    <property type="entry name" value="RecA-like_ClpB_Hsp104-like"/>
    <property type="match status" value="1"/>
</dbReference>
<dbReference type="FunFam" id="3.40.50.300:FF:000120">
    <property type="entry name" value="ATP-dependent chaperone ClpB"/>
    <property type="match status" value="1"/>
</dbReference>
<dbReference type="FunFam" id="3.40.50.300:FF:000025">
    <property type="entry name" value="ATP-dependent Clp protease subunit"/>
    <property type="match status" value="1"/>
</dbReference>
<dbReference type="FunFam" id="3.40.50.300:FF:000010">
    <property type="entry name" value="Chaperone clpB 1, putative"/>
    <property type="match status" value="1"/>
</dbReference>
<dbReference type="Gene3D" id="1.10.8.60">
    <property type="match status" value="1"/>
</dbReference>
<dbReference type="Gene3D" id="1.10.1780.10">
    <property type="entry name" value="Clp, N-terminal domain"/>
    <property type="match status" value="1"/>
</dbReference>
<dbReference type="Gene3D" id="3.40.50.300">
    <property type="entry name" value="P-loop containing nucleotide triphosphate hydrolases"/>
    <property type="match status" value="3"/>
</dbReference>
<dbReference type="InterPro" id="IPR003593">
    <property type="entry name" value="AAA+_ATPase"/>
</dbReference>
<dbReference type="InterPro" id="IPR003959">
    <property type="entry name" value="ATPase_AAA_core"/>
</dbReference>
<dbReference type="InterPro" id="IPR017730">
    <property type="entry name" value="Chaperonin_ClpB"/>
</dbReference>
<dbReference type="InterPro" id="IPR019489">
    <property type="entry name" value="Clp_ATPase_C"/>
</dbReference>
<dbReference type="InterPro" id="IPR036628">
    <property type="entry name" value="Clp_N_dom_sf"/>
</dbReference>
<dbReference type="InterPro" id="IPR004176">
    <property type="entry name" value="Clp_R_dom"/>
</dbReference>
<dbReference type="InterPro" id="IPR001270">
    <property type="entry name" value="ClpA/B"/>
</dbReference>
<dbReference type="InterPro" id="IPR018368">
    <property type="entry name" value="ClpA/B_CS1"/>
</dbReference>
<dbReference type="InterPro" id="IPR028299">
    <property type="entry name" value="ClpA/B_CS2"/>
</dbReference>
<dbReference type="InterPro" id="IPR041546">
    <property type="entry name" value="ClpA/ClpB_AAA_lid"/>
</dbReference>
<dbReference type="InterPro" id="IPR050130">
    <property type="entry name" value="ClpA_ClpB"/>
</dbReference>
<dbReference type="InterPro" id="IPR027417">
    <property type="entry name" value="P-loop_NTPase"/>
</dbReference>
<dbReference type="NCBIfam" id="TIGR03346">
    <property type="entry name" value="chaperone_ClpB"/>
    <property type="match status" value="1"/>
</dbReference>
<dbReference type="PANTHER" id="PTHR11638">
    <property type="entry name" value="ATP-DEPENDENT CLP PROTEASE"/>
    <property type="match status" value="1"/>
</dbReference>
<dbReference type="PANTHER" id="PTHR11638:SF18">
    <property type="entry name" value="HEAT SHOCK PROTEIN 104"/>
    <property type="match status" value="1"/>
</dbReference>
<dbReference type="Pfam" id="PF00004">
    <property type="entry name" value="AAA"/>
    <property type="match status" value="1"/>
</dbReference>
<dbReference type="Pfam" id="PF07724">
    <property type="entry name" value="AAA_2"/>
    <property type="match status" value="1"/>
</dbReference>
<dbReference type="Pfam" id="PF17871">
    <property type="entry name" value="AAA_lid_9"/>
    <property type="match status" value="1"/>
</dbReference>
<dbReference type="Pfam" id="PF02861">
    <property type="entry name" value="Clp_N"/>
    <property type="match status" value="2"/>
</dbReference>
<dbReference type="Pfam" id="PF10431">
    <property type="entry name" value="ClpB_D2-small"/>
    <property type="match status" value="1"/>
</dbReference>
<dbReference type="PRINTS" id="PR00300">
    <property type="entry name" value="CLPPROTEASEA"/>
</dbReference>
<dbReference type="SMART" id="SM00382">
    <property type="entry name" value="AAA"/>
    <property type="match status" value="2"/>
</dbReference>
<dbReference type="SMART" id="SM01086">
    <property type="entry name" value="ClpB_D2-small"/>
    <property type="match status" value="1"/>
</dbReference>
<dbReference type="SUPFAM" id="SSF81923">
    <property type="entry name" value="Double Clp-N motif"/>
    <property type="match status" value="1"/>
</dbReference>
<dbReference type="SUPFAM" id="SSF52540">
    <property type="entry name" value="P-loop containing nucleoside triphosphate hydrolases"/>
    <property type="match status" value="2"/>
</dbReference>
<dbReference type="PROSITE" id="PS51903">
    <property type="entry name" value="CLP_R"/>
    <property type="match status" value="1"/>
</dbReference>
<dbReference type="PROSITE" id="PS00870">
    <property type="entry name" value="CLPAB_1"/>
    <property type="match status" value="1"/>
</dbReference>
<dbReference type="PROSITE" id="PS00871">
    <property type="entry name" value="CLPAB_2"/>
    <property type="match status" value="1"/>
</dbReference>
<comment type="function">
    <text evidence="1">Part of a stress-induced multi-chaperone system, it is involved in the recovery of the cell from heat-induced damage, in cooperation with DnaK, DnaJ and GrpE. Acts before DnaK, in the processing of protein aggregates. Protein binding stimulates the ATPase activity; ATP hydrolysis unfolds the denatured protein aggregates, which probably helps expose new hydrophobic binding sites on the surface of ClpB-bound aggregates, contributing to the solubilization and refolding of denatured protein aggregates by DnaK (By similarity).</text>
</comment>
<comment type="subunit">
    <text evidence="1">Homohexamer. The oligomerization is ATP-dependent (By similarity).</text>
</comment>
<comment type="subcellular location">
    <subcellularLocation>
        <location evidence="3">Cytoplasm</location>
    </subcellularLocation>
</comment>
<comment type="domain">
    <text evidence="1">The Clp repeat (R) domain probably functions as a substrate-discriminating domain, recruiting aggregated proteins to the ClpB hexamer and/or stabilizing bound proteins. The NBD2 domain is responsible for oligomerization, whereas the NBD1 domain stabilizes the hexamer probably in an ATP-dependent manner. The movement of the coiled-coil domain is essential for ClpB ability to rescue proteins from an aggregated state, probably by pulling apart large aggregated proteins, which are bound between the coiled-coils motifs of adjacent ClpB subunits in the functional hexamer (By similarity).</text>
</comment>
<comment type="similarity">
    <text evidence="3">Belongs to the ClpA/ClpB family.</text>
</comment>
<evidence type="ECO:0000250" key="1"/>
<evidence type="ECO:0000255" key="2">
    <source>
        <dbReference type="PROSITE-ProRule" id="PRU01251"/>
    </source>
</evidence>
<evidence type="ECO:0000305" key="3"/>
<name>CLPB_PORGI</name>